<gene>
    <name type="primary">vax1</name>
</gene>
<feature type="chain" id="PRO_0000240526" description="Ventral anterior homeobox 1">
    <location>
        <begin position="1"/>
        <end position="317"/>
    </location>
</feature>
<feature type="DNA-binding region" description="Homeobox" evidence="1">
    <location>
        <begin position="92"/>
        <end position="151"/>
    </location>
</feature>
<feature type="region of interest" description="Disordered" evidence="2">
    <location>
        <begin position="1"/>
        <end position="62"/>
    </location>
</feature>
<feature type="region of interest" description="Disordered" evidence="2">
    <location>
        <begin position="203"/>
        <end position="248"/>
    </location>
</feature>
<feature type="compositionally biased region" description="Basic and acidic residues" evidence="2">
    <location>
        <begin position="18"/>
        <end position="27"/>
    </location>
</feature>
<feature type="compositionally biased region" description="Low complexity" evidence="2">
    <location>
        <begin position="212"/>
        <end position="225"/>
    </location>
</feature>
<feature type="compositionally biased region" description="Polar residues" evidence="2">
    <location>
        <begin position="236"/>
        <end position="247"/>
    </location>
</feature>
<feature type="sequence conflict" description="In Ref. 2; AAH65951." evidence="4" ref="2">
    <original>R</original>
    <variation>S</variation>
    <location>
        <position position="219"/>
    </location>
</feature>
<feature type="sequence conflict" description="In Ref. 2; AAH65951." evidence="4" ref="2">
    <original>C</original>
    <variation>S</variation>
    <location>
        <position position="295"/>
    </location>
</feature>
<organism>
    <name type="scientific">Danio rerio</name>
    <name type="common">Zebrafish</name>
    <name type="synonym">Brachydanio rerio</name>
    <dbReference type="NCBI Taxonomy" id="7955"/>
    <lineage>
        <taxon>Eukaryota</taxon>
        <taxon>Metazoa</taxon>
        <taxon>Chordata</taxon>
        <taxon>Craniata</taxon>
        <taxon>Vertebrata</taxon>
        <taxon>Euteleostomi</taxon>
        <taxon>Actinopterygii</taxon>
        <taxon>Neopterygii</taxon>
        <taxon>Teleostei</taxon>
        <taxon>Ostariophysi</taxon>
        <taxon>Cypriniformes</taxon>
        <taxon>Danionidae</taxon>
        <taxon>Danioninae</taxon>
        <taxon>Danio</taxon>
    </lineage>
</organism>
<evidence type="ECO:0000255" key="1">
    <source>
        <dbReference type="PROSITE-ProRule" id="PRU00108"/>
    </source>
</evidence>
<evidence type="ECO:0000256" key="2">
    <source>
        <dbReference type="SAM" id="MobiDB-lite"/>
    </source>
</evidence>
<evidence type="ECO:0000269" key="3">
    <source>
    </source>
</evidence>
<evidence type="ECO:0000305" key="4"/>
<sequence length="317" mass="33940">MEVRYSQDSESGMLLKNGLKEGKEGKDSQGSISKTFLKDQQESFSPSGAVENCEKSRASSGDPDYCRRILVRDAKGSIREIILPKGLDLDRPKRTRTSFTAEQLYRLEMEFQRCQYVVGRERTELARQLNLSETQVKVWFQNRRTKQKKDQGKDSELRSVVSETAATCSVLRLLEQGRLLTPPGLPGLLPHCGSSSLGSALRGPSLGITANGGSSSSSRSSAGSSGTAGGSPPLPTVTSSGTVTGLQGSPPAHGLFSFPMPSLLGSVASRISSTPLGMAGSLAGNLQELSARYLCSSAFEPYSRTNGKEALDKKVLE</sequence>
<comment type="function">
    <text evidence="3">Transcription factor that is required for closure of the choroid fissure and together with Vax2 is required for optic nerve differentiation and to limit retinal development to the optic cup.</text>
</comment>
<comment type="subcellular location">
    <subcellularLocation>
        <location evidence="1">Nucleus</location>
    </subcellularLocation>
</comment>
<comment type="tissue specificity">
    <text evidence="3">Expressed in the anterior neural keel and later in the preoptic area and optic stalk.</text>
</comment>
<comment type="developmental stage">
    <text evidence="3">First detected in the anterior neural keel at 7 somites. By 12 somites, expression is more robust in the medial forebrain and forming eyes. By 16 somites, expression remains within the optic stalk and is predominantly restricted to tissue ventral to the optic stalk and ventral preoptic area. In addition to optic stalk and ventral preoptic area, weakly expressed in the ventral retina near the choroid fissure region by 24 hpf (hours post-fertilization). At 48 hpf, expression remains prominent in the ventral preoptic area but is much reduced in the choroid fissure and optic stalk.</text>
</comment>
<comment type="similarity">
    <text evidence="4">Belongs to the EMX homeobox family.</text>
</comment>
<keyword id="KW-0217">Developmental protein</keyword>
<keyword id="KW-0238">DNA-binding</keyword>
<keyword id="KW-0371">Homeobox</keyword>
<keyword id="KW-0539">Nucleus</keyword>
<keyword id="KW-1185">Reference proteome</keyword>
<keyword id="KW-0804">Transcription</keyword>
<keyword id="KW-0805">Transcription regulation</keyword>
<reference key="1">
    <citation type="journal article" date="2003" name="Development">
        <title>Hedgehog signalling maintains the optic stalk-retinal interface through the regulation of Vax gene activity.</title>
        <authorList>
            <person name="Take-uchi M."/>
            <person name="Clarke J.D.W."/>
            <person name="Wilson S.W."/>
        </authorList>
    </citation>
    <scope>NUCLEOTIDE SEQUENCE [MRNA]</scope>
    <scope>FUNCTION</scope>
    <scope>TISSUE SPECIFICITY</scope>
    <scope>DEVELOPMENTAL STAGE</scope>
</reference>
<reference key="2">
    <citation type="submission" date="2004-02" db="EMBL/GenBank/DDBJ databases">
        <authorList>
            <consortium name="NIH - Zebrafish Gene Collection (ZGC) project"/>
        </authorList>
    </citation>
    <scope>NUCLEOTIDE SEQUENCE [LARGE SCALE MRNA]</scope>
    <source>
        <tissue>Embryo</tissue>
    </source>
</reference>
<dbReference type="EMBL" id="AY185348">
    <property type="protein sequence ID" value="AAO32143.1"/>
    <property type="molecule type" value="mRNA"/>
</dbReference>
<dbReference type="EMBL" id="BC065951">
    <property type="protein sequence ID" value="AAH65951.2"/>
    <property type="molecule type" value="mRNA"/>
</dbReference>
<dbReference type="RefSeq" id="NP_919391.2">
    <property type="nucleotide sequence ID" value="NM_194410.2"/>
</dbReference>
<dbReference type="RefSeq" id="XP_017207092.1">
    <property type="nucleotide sequence ID" value="XM_017351603.1"/>
</dbReference>
<dbReference type="SMR" id="Q801E0"/>
<dbReference type="FunCoup" id="Q801E0">
    <property type="interactions" value="76"/>
</dbReference>
<dbReference type="STRING" id="7955.ENSDARP00000039283"/>
<dbReference type="PaxDb" id="7955-ENSDARP00000039283"/>
<dbReference type="GeneID" id="373870"/>
<dbReference type="KEGG" id="dre:373870"/>
<dbReference type="AGR" id="ZFIN:ZDB-GENE-030904-9"/>
<dbReference type="CTD" id="11023"/>
<dbReference type="ZFIN" id="ZDB-GENE-030904-9">
    <property type="gene designation" value="vax1"/>
</dbReference>
<dbReference type="eggNOG" id="KOG0843">
    <property type="taxonomic scope" value="Eukaryota"/>
</dbReference>
<dbReference type="InParanoid" id="Q801E0"/>
<dbReference type="OrthoDB" id="6159439at2759"/>
<dbReference type="PhylomeDB" id="Q801E0"/>
<dbReference type="TreeFam" id="TF319504"/>
<dbReference type="PRO" id="PR:Q801E0"/>
<dbReference type="Proteomes" id="UP000000437">
    <property type="component" value="Alternate scaffold 17"/>
</dbReference>
<dbReference type="Proteomes" id="UP000000437">
    <property type="component" value="Chromosome 17"/>
</dbReference>
<dbReference type="GO" id="GO:0005634">
    <property type="term" value="C:nucleus"/>
    <property type="evidence" value="ECO:0000318"/>
    <property type="project" value="GO_Central"/>
</dbReference>
<dbReference type="GO" id="GO:0000981">
    <property type="term" value="F:DNA-binding transcription factor activity, RNA polymerase II-specific"/>
    <property type="evidence" value="ECO:0000318"/>
    <property type="project" value="GO_Central"/>
</dbReference>
<dbReference type="GO" id="GO:0000978">
    <property type="term" value="F:RNA polymerase II cis-regulatory region sequence-specific DNA binding"/>
    <property type="evidence" value="ECO:0000318"/>
    <property type="project" value="GO_Central"/>
</dbReference>
<dbReference type="GO" id="GO:0007420">
    <property type="term" value="P:brain development"/>
    <property type="evidence" value="ECO:0000318"/>
    <property type="project" value="GO_Central"/>
</dbReference>
<dbReference type="GO" id="GO:0007417">
    <property type="term" value="P:central nervous system development"/>
    <property type="evidence" value="ECO:0000318"/>
    <property type="project" value="GO_Central"/>
</dbReference>
<dbReference type="GO" id="GO:0061386">
    <property type="term" value="P:closure of optic fissure"/>
    <property type="evidence" value="ECO:0000315"/>
    <property type="project" value="ZFIN"/>
</dbReference>
<dbReference type="GO" id="GO:1902254">
    <property type="term" value="P:negative regulation of intrinsic apoptotic signaling pathway by p53 class mediator"/>
    <property type="evidence" value="ECO:0000316"/>
    <property type="project" value="ZFIN"/>
</dbReference>
<dbReference type="GO" id="GO:0030182">
    <property type="term" value="P:neuron differentiation"/>
    <property type="evidence" value="ECO:0000318"/>
    <property type="project" value="GO_Central"/>
</dbReference>
<dbReference type="GO" id="GO:0021554">
    <property type="term" value="P:optic nerve development"/>
    <property type="evidence" value="ECO:0000315"/>
    <property type="project" value="ZFIN"/>
</dbReference>
<dbReference type="GO" id="GO:0090259">
    <property type="term" value="P:regulation of retinal ganglion cell axon guidance"/>
    <property type="evidence" value="ECO:0000315"/>
    <property type="project" value="ZFIN"/>
</dbReference>
<dbReference type="GO" id="GO:0006357">
    <property type="term" value="P:regulation of transcription by RNA polymerase II"/>
    <property type="evidence" value="ECO:0000318"/>
    <property type="project" value="GO_Central"/>
</dbReference>
<dbReference type="GO" id="GO:0060041">
    <property type="term" value="P:retina development in camera-type eye"/>
    <property type="evidence" value="ECO:0000315"/>
    <property type="project" value="ZFIN"/>
</dbReference>
<dbReference type="GO" id="GO:0060042">
    <property type="term" value="P:retina morphogenesis in camera-type eye"/>
    <property type="evidence" value="ECO:0000316"/>
    <property type="project" value="ZFIN"/>
</dbReference>
<dbReference type="CDD" id="cd00086">
    <property type="entry name" value="homeodomain"/>
    <property type="match status" value="1"/>
</dbReference>
<dbReference type="FunFam" id="1.10.10.60:FF:000375">
    <property type="entry name" value="Ventral anterior homeobox 1"/>
    <property type="match status" value="1"/>
</dbReference>
<dbReference type="Gene3D" id="1.10.10.60">
    <property type="entry name" value="Homeodomain-like"/>
    <property type="match status" value="1"/>
</dbReference>
<dbReference type="InterPro" id="IPR050877">
    <property type="entry name" value="EMX-VAX-Noto_Homeobox_TFs"/>
</dbReference>
<dbReference type="InterPro" id="IPR001356">
    <property type="entry name" value="HD"/>
</dbReference>
<dbReference type="InterPro" id="IPR017970">
    <property type="entry name" value="Homeobox_CS"/>
</dbReference>
<dbReference type="InterPro" id="IPR009057">
    <property type="entry name" value="Homeodomain-like_sf"/>
</dbReference>
<dbReference type="InterPro" id="IPR000047">
    <property type="entry name" value="HTH_motif"/>
</dbReference>
<dbReference type="PANTHER" id="PTHR24339">
    <property type="entry name" value="HOMEOBOX PROTEIN EMX-RELATED"/>
    <property type="match status" value="1"/>
</dbReference>
<dbReference type="PANTHER" id="PTHR24339:SF32">
    <property type="entry name" value="VENTRAL ANTERIOR HOMEOBOX 1"/>
    <property type="match status" value="1"/>
</dbReference>
<dbReference type="Pfam" id="PF00046">
    <property type="entry name" value="Homeodomain"/>
    <property type="match status" value="1"/>
</dbReference>
<dbReference type="PRINTS" id="PR00031">
    <property type="entry name" value="HTHREPRESSR"/>
</dbReference>
<dbReference type="SMART" id="SM00389">
    <property type="entry name" value="HOX"/>
    <property type="match status" value="1"/>
</dbReference>
<dbReference type="SUPFAM" id="SSF46689">
    <property type="entry name" value="Homeodomain-like"/>
    <property type="match status" value="1"/>
</dbReference>
<dbReference type="PROSITE" id="PS00027">
    <property type="entry name" value="HOMEOBOX_1"/>
    <property type="match status" value="1"/>
</dbReference>
<dbReference type="PROSITE" id="PS50071">
    <property type="entry name" value="HOMEOBOX_2"/>
    <property type="match status" value="1"/>
</dbReference>
<proteinExistence type="evidence at transcript level"/>
<name>VAX1_DANRE</name>
<accession>Q801E0</accession>
<accession>Q6NZV9</accession>
<protein>
    <recommendedName>
        <fullName>Ventral anterior homeobox 1</fullName>
    </recommendedName>
</protein>